<proteinExistence type="evidence at protein level"/>
<comment type="catalytic activity">
    <reaction evidence="1">
        <text>L-glutamate + NAD(+) + H2O = 2-oxoglutarate + NH4(+) + NADH + H(+)</text>
        <dbReference type="Rhea" id="RHEA:15133"/>
        <dbReference type="ChEBI" id="CHEBI:15377"/>
        <dbReference type="ChEBI" id="CHEBI:15378"/>
        <dbReference type="ChEBI" id="CHEBI:16810"/>
        <dbReference type="ChEBI" id="CHEBI:28938"/>
        <dbReference type="ChEBI" id="CHEBI:29985"/>
        <dbReference type="ChEBI" id="CHEBI:57540"/>
        <dbReference type="ChEBI" id="CHEBI:57945"/>
        <dbReference type="EC" id="1.4.1.3"/>
    </reaction>
</comment>
<comment type="catalytic activity">
    <reaction evidence="1">
        <text>L-glutamate + NADP(+) + H2O = 2-oxoglutarate + NH4(+) + NADPH + H(+)</text>
        <dbReference type="Rhea" id="RHEA:11612"/>
        <dbReference type="ChEBI" id="CHEBI:15377"/>
        <dbReference type="ChEBI" id="CHEBI:15378"/>
        <dbReference type="ChEBI" id="CHEBI:16810"/>
        <dbReference type="ChEBI" id="CHEBI:28938"/>
        <dbReference type="ChEBI" id="CHEBI:29985"/>
        <dbReference type="ChEBI" id="CHEBI:57783"/>
        <dbReference type="ChEBI" id="CHEBI:58349"/>
        <dbReference type="EC" id="1.4.1.3"/>
    </reaction>
</comment>
<comment type="subcellular location">
    <subcellularLocation>
        <location evidence="2 3">Mitochondrion</location>
    </subcellularLocation>
</comment>
<comment type="alternative products">
    <event type="alternative splicing"/>
    <isoform>
        <id>Q38946-1</id>
        <name>1</name>
        <sequence type="displayed"/>
    </isoform>
    <text>A number of isoforms are produced. According to EST sequences.</text>
</comment>
<comment type="similarity">
    <text evidence="4">Belongs to the Glu/Leu/Phe/Val dehydrogenases family.</text>
</comment>
<protein>
    <recommendedName>
        <fullName>Glutamate dehydrogenase 2</fullName>
        <shortName>GDH 2</shortName>
        <ecNumber>1.4.1.3</ecNumber>
    </recommendedName>
</protein>
<accession>Q38946</accession>
<gene>
    <name type="primary">GDH2</name>
    <name type="ordered locus">At5g07440</name>
    <name type="ORF">T2I1_150</name>
</gene>
<dbReference type="EC" id="1.4.1.3"/>
<dbReference type="EMBL" id="U56635">
    <property type="protein sequence ID" value="AAB01222.1"/>
    <property type="molecule type" value="mRNA"/>
</dbReference>
<dbReference type="EMBL" id="AL163912">
    <property type="protein sequence ID" value="CAB87933.1"/>
    <property type="molecule type" value="Genomic_DNA"/>
</dbReference>
<dbReference type="EMBL" id="CP002688">
    <property type="protein sequence ID" value="AED91157.1"/>
    <property type="molecule type" value="Genomic_DNA"/>
</dbReference>
<dbReference type="EMBL" id="CP002688">
    <property type="protein sequence ID" value="AED91158.1"/>
    <property type="molecule type" value="Genomic_DNA"/>
</dbReference>
<dbReference type="PIR" id="T49883">
    <property type="entry name" value="T49883"/>
</dbReference>
<dbReference type="RefSeq" id="NP_001119183.1">
    <molecule id="Q38946-1"/>
    <property type="nucleotide sequence ID" value="NM_001125711.2"/>
</dbReference>
<dbReference type="RefSeq" id="NP_196361.1">
    <molecule id="Q38946-1"/>
    <property type="nucleotide sequence ID" value="NM_120826.3"/>
</dbReference>
<dbReference type="PDB" id="8OWM">
    <property type="method" value="X-ray"/>
    <property type="resolution" value="1.70 A"/>
    <property type="chains" value="A/B/C/D/E/F=1-411"/>
</dbReference>
<dbReference type="PDB" id="8OWN">
    <property type="method" value="EM"/>
    <property type="resolution" value="3.26 A"/>
    <property type="chains" value="A/B/C/D/E/F=1-411"/>
</dbReference>
<dbReference type="PDBsum" id="8OWM"/>
<dbReference type="PDBsum" id="8OWN"/>
<dbReference type="EMDB" id="EMD-17240"/>
<dbReference type="SMR" id="Q38946"/>
<dbReference type="BioGRID" id="15914">
    <property type="interactions" value="6"/>
</dbReference>
<dbReference type="FunCoup" id="Q38946">
    <property type="interactions" value="1903"/>
</dbReference>
<dbReference type="IntAct" id="Q38946">
    <property type="interactions" value="1"/>
</dbReference>
<dbReference type="STRING" id="3702.Q38946"/>
<dbReference type="iPTMnet" id="Q38946"/>
<dbReference type="SwissPalm" id="Q38946"/>
<dbReference type="PaxDb" id="3702-AT5G07440.1"/>
<dbReference type="ProteomicsDB" id="224161">
    <molecule id="Q38946-1"/>
</dbReference>
<dbReference type="EnsemblPlants" id="AT5G07440.1">
    <molecule id="Q38946-1"/>
    <property type="protein sequence ID" value="AT5G07440.1"/>
    <property type="gene ID" value="AT5G07440"/>
</dbReference>
<dbReference type="EnsemblPlants" id="AT5G07440.2">
    <molecule id="Q38946-1"/>
    <property type="protein sequence ID" value="AT5G07440.2"/>
    <property type="gene ID" value="AT5G07440"/>
</dbReference>
<dbReference type="GeneID" id="830635"/>
<dbReference type="Gramene" id="AT5G07440.1">
    <molecule id="Q38946-1"/>
    <property type="protein sequence ID" value="AT5G07440.1"/>
    <property type="gene ID" value="AT5G07440"/>
</dbReference>
<dbReference type="Gramene" id="AT5G07440.2">
    <molecule id="Q38946-1"/>
    <property type="protein sequence ID" value="AT5G07440.2"/>
    <property type="gene ID" value="AT5G07440"/>
</dbReference>
<dbReference type="KEGG" id="ath:AT5G07440"/>
<dbReference type="Araport" id="AT5G07440"/>
<dbReference type="TAIR" id="AT5G07440">
    <property type="gene designation" value="GDH2"/>
</dbReference>
<dbReference type="eggNOG" id="KOG2250">
    <property type="taxonomic scope" value="Eukaryota"/>
</dbReference>
<dbReference type="HOGENOM" id="CLU_025763_1_2_1"/>
<dbReference type="InParanoid" id="Q38946"/>
<dbReference type="OMA" id="WMVYKCA"/>
<dbReference type="OrthoDB" id="6718861at2759"/>
<dbReference type="PhylomeDB" id="Q38946"/>
<dbReference type="BioCyc" id="ARA:AT5G07440-MONOMER"/>
<dbReference type="BioCyc" id="MetaCyc:AT5G07440-MONOMER"/>
<dbReference type="BRENDA" id="1.4.1.3">
    <property type="organism ID" value="399"/>
</dbReference>
<dbReference type="CD-CODE" id="4299E36E">
    <property type="entry name" value="Nucleolus"/>
</dbReference>
<dbReference type="PRO" id="PR:Q38946"/>
<dbReference type="Proteomes" id="UP000006548">
    <property type="component" value="Chromosome 5"/>
</dbReference>
<dbReference type="ExpressionAtlas" id="Q38946">
    <property type="expression patterns" value="baseline and differential"/>
</dbReference>
<dbReference type="GO" id="GO:0005739">
    <property type="term" value="C:mitochondrion"/>
    <property type="evidence" value="ECO:0000314"/>
    <property type="project" value="TAIR"/>
</dbReference>
<dbReference type="GO" id="GO:0000325">
    <property type="term" value="C:plant-type vacuole"/>
    <property type="evidence" value="ECO:0007005"/>
    <property type="project" value="TAIR"/>
</dbReference>
<dbReference type="GO" id="GO:0005886">
    <property type="term" value="C:plasma membrane"/>
    <property type="evidence" value="ECO:0007005"/>
    <property type="project" value="TAIR"/>
</dbReference>
<dbReference type="GO" id="GO:0005524">
    <property type="term" value="F:ATP binding"/>
    <property type="evidence" value="ECO:0007005"/>
    <property type="project" value="TAIR"/>
</dbReference>
<dbReference type="GO" id="GO:0050897">
    <property type="term" value="F:cobalt ion binding"/>
    <property type="evidence" value="ECO:0007005"/>
    <property type="project" value="TAIR"/>
</dbReference>
<dbReference type="GO" id="GO:0005507">
    <property type="term" value="F:copper ion binding"/>
    <property type="evidence" value="ECO:0007005"/>
    <property type="project" value="TAIR"/>
</dbReference>
<dbReference type="GO" id="GO:0004352">
    <property type="term" value="F:glutamate dehydrogenase (NAD+) activity"/>
    <property type="evidence" value="ECO:0000314"/>
    <property type="project" value="TAIR"/>
</dbReference>
<dbReference type="GO" id="GO:0004354">
    <property type="term" value="F:glutamate dehydrogenase (NADP+) activity"/>
    <property type="evidence" value="ECO:0007669"/>
    <property type="project" value="RHEA"/>
</dbReference>
<dbReference type="GO" id="GO:0004353">
    <property type="term" value="F:glutamate dehydrogenase [NAD(P)+] activity"/>
    <property type="evidence" value="ECO:0000314"/>
    <property type="project" value="TAIR"/>
</dbReference>
<dbReference type="GO" id="GO:0008270">
    <property type="term" value="F:zinc ion binding"/>
    <property type="evidence" value="ECO:0007005"/>
    <property type="project" value="TAIR"/>
</dbReference>
<dbReference type="GO" id="GO:0006520">
    <property type="term" value="P:amino acid metabolic process"/>
    <property type="evidence" value="ECO:0007669"/>
    <property type="project" value="InterPro"/>
</dbReference>
<dbReference type="CDD" id="cd01076">
    <property type="entry name" value="NAD_bind_1_Glu_DH"/>
    <property type="match status" value="1"/>
</dbReference>
<dbReference type="FunFam" id="3.40.50.10860:FF:000003">
    <property type="entry name" value="Glutamate dehydrogenase"/>
    <property type="match status" value="1"/>
</dbReference>
<dbReference type="FunFam" id="3.40.50.720:FF:000212">
    <property type="entry name" value="Glutamate dehydrogenase"/>
    <property type="match status" value="1"/>
</dbReference>
<dbReference type="Gene3D" id="3.40.50.10860">
    <property type="entry name" value="Leucine Dehydrogenase, chain A, domain 1"/>
    <property type="match status" value="1"/>
</dbReference>
<dbReference type="Gene3D" id="3.40.50.720">
    <property type="entry name" value="NAD(P)-binding Rossmann-like Domain"/>
    <property type="match status" value="1"/>
</dbReference>
<dbReference type="InterPro" id="IPR046346">
    <property type="entry name" value="Aminoacid_DH-like_N_sf"/>
</dbReference>
<dbReference type="InterPro" id="IPR006095">
    <property type="entry name" value="Glu/Leu/Phe/Val/Trp_DH"/>
</dbReference>
<dbReference type="InterPro" id="IPR006096">
    <property type="entry name" value="Glu/Leu/Phe/Val/Trp_DH_C"/>
</dbReference>
<dbReference type="InterPro" id="IPR006097">
    <property type="entry name" value="Glu/Leu/Phe/Val/Trp_DH_dimer"/>
</dbReference>
<dbReference type="InterPro" id="IPR033524">
    <property type="entry name" value="Glu/Leu/Phe/Val_DH_AS"/>
</dbReference>
<dbReference type="InterPro" id="IPR014362">
    <property type="entry name" value="Glu_DH"/>
</dbReference>
<dbReference type="InterPro" id="IPR036291">
    <property type="entry name" value="NAD(P)-bd_dom_sf"/>
</dbReference>
<dbReference type="InterPro" id="IPR033922">
    <property type="entry name" value="NAD_bind_Glu_DH"/>
</dbReference>
<dbReference type="PANTHER" id="PTHR11606">
    <property type="entry name" value="GLUTAMATE DEHYDROGENASE"/>
    <property type="match status" value="1"/>
</dbReference>
<dbReference type="PANTHER" id="PTHR11606:SF24">
    <property type="entry name" value="NAD-SPECIFIC GLUTAMATE DEHYDROGENASE"/>
    <property type="match status" value="1"/>
</dbReference>
<dbReference type="Pfam" id="PF00208">
    <property type="entry name" value="ELFV_dehydrog"/>
    <property type="match status" value="1"/>
</dbReference>
<dbReference type="Pfam" id="PF02812">
    <property type="entry name" value="ELFV_dehydrog_N"/>
    <property type="match status" value="1"/>
</dbReference>
<dbReference type="PIRSF" id="PIRSF000185">
    <property type="entry name" value="Glu_DH"/>
    <property type="match status" value="1"/>
</dbReference>
<dbReference type="PRINTS" id="PR00082">
    <property type="entry name" value="GLFDHDRGNASE"/>
</dbReference>
<dbReference type="SMART" id="SM00839">
    <property type="entry name" value="ELFV_dehydrog"/>
    <property type="match status" value="1"/>
</dbReference>
<dbReference type="SUPFAM" id="SSF53223">
    <property type="entry name" value="Aminoacid dehydrogenase-like, N-terminal domain"/>
    <property type="match status" value="1"/>
</dbReference>
<dbReference type="SUPFAM" id="SSF51735">
    <property type="entry name" value="NAD(P)-binding Rossmann-fold domains"/>
    <property type="match status" value="1"/>
</dbReference>
<dbReference type="PROSITE" id="PS00074">
    <property type="entry name" value="GLFV_DEHYDROGENASE"/>
    <property type="match status" value="1"/>
</dbReference>
<name>DHE2_ARATH</name>
<organism>
    <name type="scientific">Arabidopsis thaliana</name>
    <name type="common">Mouse-ear cress</name>
    <dbReference type="NCBI Taxonomy" id="3702"/>
    <lineage>
        <taxon>Eukaryota</taxon>
        <taxon>Viridiplantae</taxon>
        <taxon>Streptophyta</taxon>
        <taxon>Embryophyta</taxon>
        <taxon>Tracheophyta</taxon>
        <taxon>Spermatophyta</taxon>
        <taxon>Magnoliopsida</taxon>
        <taxon>eudicotyledons</taxon>
        <taxon>Gunneridae</taxon>
        <taxon>Pentapetalae</taxon>
        <taxon>rosids</taxon>
        <taxon>malvids</taxon>
        <taxon>Brassicales</taxon>
        <taxon>Brassicaceae</taxon>
        <taxon>Camelineae</taxon>
        <taxon>Arabidopsis</taxon>
    </lineage>
</organism>
<feature type="chain" id="PRO_0000182746" description="Glutamate dehydrogenase 2">
    <location>
        <begin position="1"/>
        <end position="411"/>
    </location>
</feature>
<feature type="active site" evidence="1">
    <location>
        <position position="102"/>
    </location>
</feature>
<feature type="sequence conflict" description="In Ref. 4; AA sequence." evidence="4" ref="4">
    <original>V</original>
    <variation>I</variation>
    <location>
        <position position="232"/>
    </location>
</feature>
<feature type="sequence conflict" description="In Ref. 4; AA sequence." evidence="4" ref="4">
    <original>IR</original>
    <variation>LK</variation>
    <location>
        <begin position="242"/>
        <end position="243"/>
    </location>
</feature>
<feature type="helix" evidence="5">
    <location>
        <begin position="3"/>
        <end position="18"/>
    </location>
</feature>
<feature type="helix" evidence="5">
    <location>
        <begin position="22"/>
        <end position="29"/>
    </location>
</feature>
<feature type="strand" evidence="5">
    <location>
        <begin position="32"/>
        <end position="42"/>
    </location>
</feature>
<feature type="strand" evidence="6">
    <location>
        <begin position="44"/>
        <end position="46"/>
    </location>
</feature>
<feature type="strand" evidence="5">
    <location>
        <begin position="48"/>
        <end position="59"/>
    </location>
</feature>
<feature type="strand" evidence="5">
    <location>
        <begin position="63"/>
        <end position="66"/>
    </location>
</feature>
<feature type="strand" evidence="5">
    <location>
        <begin position="69"/>
        <end position="71"/>
    </location>
</feature>
<feature type="helix" evidence="5">
    <location>
        <begin position="77"/>
        <end position="94"/>
    </location>
</feature>
<feature type="strand" evidence="5">
    <location>
        <begin position="99"/>
        <end position="105"/>
    </location>
</feature>
<feature type="helix" evidence="5">
    <location>
        <begin position="109"/>
        <end position="111"/>
    </location>
</feature>
<feature type="helix" evidence="5">
    <location>
        <begin position="114"/>
        <end position="128"/>
    </location>
</feature>
<feature type="helix" evidence="5">
    <location>
        <begin position="129"/>
        <end position="131"/>
    </location>
</feature>
<feature type="turn" evidence="5">
    <location>
        <begin position="134"/>
        <end position="136"/>
    </location>
</feature>
<feature type="strand" evidence="6">
    <location>
        <begin position="137"/>
        <end position="141"/>
    </location>
</feature>
<feature type="helix" evidence="5">
    <location>
        <begin position="147"/>
        <end position="161"/>
    </location>
</feature>
<feature type="helix" evidence="5">
    <location>
        <begin position="165"/>
        <end position="167"/>
    </location>
</feature>
<feature type="strand" evidence="5">
    <location>
        <begin position="168"/>
        <end position="170"/>
    </location>
</feature>
<feature type="helix" evidence="5">
    <location>
        <begin position="173"/>
        <end position="175"/>
    </location>
</feature>
<feature type="turn" evidence="5">
    <location>
        <begin position="179"/>
        <end position="183"/>
    </location>
</feature>
<feature type="helix" evidence="5">
    <location>
        <begin position="184"/>
        <end position="198"/>
    </location>
</feature>
<feature type="turn" evidence="5">
    <location>
        <begin position="199"/>
        <end position="201"/>
    </location>
</feature>
<feature type="strand" evidence="5">
    <location>
        <begin position="208"/>
        <end position="212"/>
    </location>
</feature>
<feature type="helix" evidence="5">
    <location>
        <begin position="216"/>
        <end position="227"/>
    </location>
</feature>
<feature type="strand" evidence="5">
    <location>
        <begin position="231"/>
        <end position="237"/>
    </location>
</feature>
<feature type="strand" evidence="5">
    <location>
        <begin position="240"/>
        <end position="243"/>
    </location>
</feature>
<feature type="helix" evidence="5">
    <location>
        <begin position="250"/>
        <end position="260"/>
    </location>
</feature>
<feature type="strand" evidence="6">
    <location>
        <begin position="261"/>
        <end position="263"/>
    </location>
</feature>
<feature type="strand" evidence="5">
    <location>
        <begin position="269"/>
        <end position="272"/>
    </location>
</feature>
<feature type="helix" evidence="5">
    <location>
        <begin position="274"/>
        <end position="276"/>
    </location>
</feature>
<feature type="helix" evidence="6">
    <location>
        <begin position="277"/>
        <end position="279"/>
    </location>
</feature>
<feature type="strand" evidence="5">
    <location>
        <begin position="283"/>
        <end position="287"/>
    </location>
</feature>
<feature type="turn" evidence="5">
    <location>
        <begin position="296"/>
        <end position="298"/>
    </location>
</feature>
<feature type="helix" evidence="5">
    <location>
        <begin position="299"/>
        <end position="301"/>
    </location>
</feature>
<feature type="strand" evidence="5">
    <location>
        <begin position="305"/>
        <end position="308"/>
    </location>
</feature>
<feature type="strand" evidence="5">
    <location>
        <begin position="311"/>
        <end position="313"/>
    </location>
</feature>
<feature type="helix" evidence="5">
    <location>
        <begin position="317"/>
        <end position="325"/>
    </location>
</feature>
<feature type="strand" evidence="5">
    <location>
        <begin position="329"/>
        <end position="331"/>
    </location>
</feature>
<feature type="helix" evidence="5">
    <location>
        <begin position="333"/>
        <end position="336"/>
    </location>
</feature>
<feature type="helix" evidence="5">
    <location>
        <begin position="339"/>
        <end position="353"/>
    </location>
</feature>
<feature type="helix" evidence="5">
    <location>
        <begin position="359"/>
        <end position="384"/>
    </location>
</feature>
<feature type="helix" evidence="5">
    <location>
        <begin position="388"/>
        <end position="407"/>
    </location>
</feature>
<sequence length="411" mass="44699">MNALAATNRNFRHASRILGLDSKIERSLMIPFREIKVECTIPKDDGTLVSYIGFRVQHDNARGPMKGGIRYHPEVDPDEVNALAQLMTWKTAVADIPYGGAKGGIGCSPRDLSLSELERLTRVFTQKIHDLIGIHTDVPAPDMGTNAQTMAWILDEYSKFHGHSPAVVTGKPIDLGGSLGREAATGRGVVFATEALLAEYGKSIQGLTFVIQGFGNVGTWAAKLIHEKGGKVVAVSDITGAIRNPEGIDINALIKHKDATGSLNDFNGGDAMNSDELLIHECDVLIPCALGGVLNKENAGDVKAKFIVEAANHPTDPDADEILSKKGVIILPDIYANAGGVTVSYFEWVQNIQGFMWEEEKVNLELQKYMTRAFHNIKTMCHTHSCNLRMGAFTLGVNRVARATQLRGWEA</sequence>
<keyword id="KW-0002">3D-structure</keyword>
<keyword id="KW-0025">Alternative splicing</keyword>
<keyword id="KW-0903">Direct protein sequencing</keyword>
<keyword id="KW-0496">Mitochondrion</keyword>
<keyword id="KW-0520">NAD</keyword>
<keyword id="KW-0560">Oxidoreductase</keyword>
<keyword id="KW-1185">Reference proteome</keyword>
<evidence type="ECO:0000255" key="1">
    <source>
        <dbReference type="PROSITE-ProRule" id="PRU10011"/>
    </source>
</evidence>
<evidence type="ECO:0000269" key="2">
    <source>
    </source>
</evidence>
<evidence type="ECO:0000269" key="3">
    <source>
    </source>
</evidence>
<evidence type="ECO:0000305" key="4"/>
<evidence type="ECO:0007829" key="5">
    <source>
        <dbReference type="PDB" id="8OWM"/>
    </source>
</evidence>
<evidence type="ECO:0007829" key="6">
    <source>
        <dbReference type="PDB" id="8OWN"/>
    </source>
</evidence>
<reference key="1">
    <citation type="submission" date="1996-04" db="EMBL/GenBank/DDBJ databases">
        <authorList>
            <person name="Turano F.J."/>
            <person name="Thakkar S.S."/>
            <person name="Weisemann J.M."/>
        </authorList>
    </citation>
    <scope>NUCLEOTIDE SEQUENCE [MRNA]</scope>
    <source>
        <strain>cv. Columbia</strain>
    </source>
</reference>
<reference key="2">
    <citation type="journal article" date="2000" name="Nature">
        <title>Sequence and analysis of chromosome 5 of the plant Arabidopsis thaliana.</title>
        <authorList>
            <person name="Tabata S."/>
            <person name="Kaneko T."/>
            <person name="Nakamura Y."/>
            <person name="Kotani H."/>
            <person name="Kato T."/>
            <person name="Asamizu E."/>
            <person name="Miyajima N."/>
            <person name="Sasamoto S."/>
            <person name="Kimura T."/>
            <person name="Hosouchi T."/>
            <person name="Kawashima K."/>
            <person name="Kohara M."/>
            <person name="Matsumoto M."/>
            <person name="Matsuno A."/>
            <person name="Muraki A."/>
            <person name="Nakayama S."/>
            <person name="Nakazaki N."/>
            <person name="Naruo K."/>
            <person name="Okumura S."/>
            <person name="Shinpo S."/>
            <person name="Takeuchi C."/>
            <person name="Wada T."/>
            <person name="Watanabe A."/>
            <person name="Yamada M."/>
            <person name="Yasuda M."/>
            <person name="Sato S."/>
            <person name="de la Bastide M."/>
            <person name="Huang E."/>
            <person name="Spiegel L."/>
            <person name="Gnoj L."/>
            <person name="O'Shaughnessy A."/>
            <person name="Preston R."/>
            <person name="Habermann K."/>
            <person name="Murray J."/>
            <person name="Johnson D."/>
            <person name="Rohlfing T."/>
            <person name="Nelson J."/>
            <person name="Stoneking T."/>
            <person name="Pepin K."/>
            <person name="Spieth J."/>
            <person name="Sekhon M."/>
            <person name="Armstrong J."/>
            <person name="Becker M."/>
            <person name="Belter E."/>
            <person name="Cordum H."/>
            <person name="Cordes M."/>
            <person name="Courtney L."/>
            <person name="Courtney W."/>
            <person name="Dante M."/>
            <person name="Du H."/>
            <person name="Edwards J."/>
            <person name="Fryman J."/>
            <person name="Haakensen B."/>
            <person name="Lamar E."/>
            <person name="Latreille P."/>
            <person name="Leonard S."/>
            <person name="Meyer R."/>
            <person name="Mulvaney E."/>
            <person name="Ozersky P."/>
            <person name="Riley A."/>
            <person name="Strowmatt C."/>
            <person name="Wagner-McPherson C."/>
            <person name="Wollam A."/>
            <person name="Yoakum M."/>
            <person name="Bell M."/>
            <person name="Dedhia N."/>
            <person name="Parnell L."/>
            <person name="Shah R."/>
            <person name="Rodriguez M."/>
            <person name="Hoon See L."/>
            <person name="Vil D."/>
            <person name="Baker J."/>
            <person name="Kirchoff K."/>
            <person name="Toth K."/>
            <person name="King L."/>
            <person name="Bahret A."/>
            <person name="Miller B."/>
            <person name="Marra M.A."/>
            <person name="Martienssen R."/>
            <person name="McCombie W.R."/>
            <person name="Wilson R.K."/>
            <person name="Murphy G."/>
            <person name="Bancroft I."/>
            <person name="Volckaert G."/>
            <person name="Wambutt R."/>
            <person name="Duesterhoeft A."/>
            <person name="Stiekema W."/>
            <person name="Pohl T."/>
            <person name="Entian K.-D."/>
            <person name="Terryn N."/>
            <person name="Hartley N."/>
            <person name="Bent E."/>
            <person name="Johnson S."/>
            <person name="Langham S.-A."/>
            <person name="McCullagh B."/>
            <person name="Robben J."/>
            <person name="Grymonprez B."/>
            <person name="Zimmermann W."/>
            <person name="Ramsperger U."/>
            <person name="Wedler H."/>
            <person name="Balke K."/>
            <person name="Wedler E."/>
            <person name="Peters S."/>
            <person name="van Staveren M."/>
            <person name="Dirkse W."/>
            <person name="Mooijman P."/>
            <person name="Klein Lankhorst R."/>
            <person name="Weitzenegger T."/>
            <person name="Bothe G."/>
            <person name="Rose M."/>
            <person name="Hauf J."/>
            <person name="Berneiser S."/>
            <person name="Hempel S."/>
            <person name="Feldpausch M."/>
            <person name="Lamberth S."/>
            <person name="Villarroel R."/>
            <person name="Gielen J."/>
            <person name="Ardiles W."/>
            <person name="Bents O."/>
            <person name="Lemcke K."/>
            <person name="Kolesov G."/>
            <person name="Mayer K.F.X."/>
            <person name="Rudd S."/>
            <person name="Schoof H."/>
            <person name="Schueller C."/>
            <person name="Zaccaria P."/>
            <person name="Mewes H.-W."/>
            <person name="Bevan M."/>
            <person name="Fransz P.F."/>
        </authorList>
    </citation>
    <scope>NUCLEOTIDE SEQUENCE [LARGE SCALE GENOMIC DNA]</scope>
    <source>
        <strain>cv. Columbia</strain>
    </source>
</reference>
<reference key="3">
    <citation type="journal article" date="2017" name="Plant J.">
        <title>Araport11: a complete reannotation of the Arabidopsis thaliana reference genome.</title>
        <authorList>
            <person name="Cheng C.Y."/>
            <person name="Krishnakumar V."/>
            <person name="Chan A.P."/>
            <person name="Thibaud-Nissen F."/>
            <person name="Schobel S."/>
            <person name="Town C.D."/>
        </authorList>
    </citation>
    <scope>GENOME REANNOTATION</scope>
    <source>
        <strain>cv. Columbia</strain>
    </source>
</reference>
<reference key="4">
    <citation type="journal article" date="2001" name="Plant Physiol.">
        <title>Proteomic approach to identify novel mitochondrial proteins in Arabidopsis.</title>
        <authorList>
            <person name="Kruft V."/>
            <person name="Eubel H."/>
            <person name="Jaensch L."/>
            <person name="Werhahn W."/>
            <person name="Braun H.-P."/>
        </authorList>
    </citation>
    <scope>PROTEIN SEQUENCE OF 232-243 AND 391-399</scope>
    <scope>SUBCELLULAR LOCATION</scope>
    <source>
        <tissue>Leaf</tissue>
        <tissue>Stem</tissue>
    </source>
</reference>
<reference key="5">
    <citation type="journal article" date="2004" name="Plant Cell">
        <title>Experimental analysis of the Arabidopsis mitochondrial proteome highlights signaling and regulatory components, provides assessment of targeting prediction programs, and indicates plant-specific mitochondrial proteins.</title>
        <authorList>
            <person name="Heazlewood J.L."/>
            <person name="Tonti-Filippini J.S."/>
            <person name="Gout A.M."/>
            <person name="Day D.A."/>
            <person name="Whelan J."/>
            <person name="Millar A.H."/>
        </authorList>
    </citation>
    <scope>IDENTIFICATION BY MASS SPECTROMETRY</scope>
    <scope>SUBCELLULAR LOCATION [LARGE SCALE ANALYSIS]</scope>
    <source>
        <strain>cv. Landsberg erecta</strain>
    </source>
</reference>